<name>FLIH_SALTY</name>
<proteinExistence type="evidence at protein level"/>
<organism>
    <name type="scientific">Salmonella typhimurium (strain LT2 / SGSC1412 / ATCC 700720)</name>
    <dbReference type="NCBI Taxonomy" id="99287"/>
    <lineage>
        <taxon>Bacteria</taxon>
        <taxon>Pseudomonadati</taxon>
        <taxon>Pseudomonadota</taxon>
        <taxon>Gammaproteobacteria</taxon>
        <taxon>Enterobacterales</taxon>
        <taxon>Enterobacteriaceae</taxon>
        <taxon>Salmonella</taxon>
    </lineage>
</organism>
<feature type="chain" id="PRO_0000180894" description="Flagellar assembly protein FliH">
    <location>
        <begin position="1"/>
        <end position="235"/>
    </location>
</feature>
<feature type="region of interest" description="Disordered" evidence="1">
    <location>
        <begin position="1"/>
        <end position="22"/>
    </location>
</feature>
<feature type="helix" evidence="3">
    <location>
        <begin position="101"/>
        <end position="141"/>
    </location>
</feature>
<feature type="helix" evidence="3">
    <location>
        <begin position="148"/>
        <end position="158"/>
    </location>
</feature>
<feature type="strand" evidence="3">
    <location>
        <begin position="169"/>
        <end position="172"/>
    </location>
</feature>
<feature type="helix" evidence="3">
    <location>
        <begin position="174"/>
        <end position="190"/>
    </location>
</feature>
<feature type="strand" evidence="3">
    <location>
        <begin position="194"/>
        <end position="197"/>
    </location>
</feature>
<feature type="strand" evidence="3">
    <location>
        <begin position="207"/>
        <end position="209"/>
    </location>
</feature>
<feature type="strand" evidence="3">
    <location>
        <begin position="214"/>
        <end position="216"/>
    </location>
</feature>
<feature type="helix" evidence="3">
    <location>
        <begin position="219"/>
        <end position="230"/>
    </location>
</feature>
<comment type="function">
    <text>Needed for flagellar regrowth and assembly.</text>
</comment>
<comment type="interaction">
    <interactant intactId="EBI-6410310">
        <id>P15934</id>
    </interactant>
    <interactant intactId="EBI-6410261">
        <id>P40729</id>
        <label>flhA</label>
    </interactant>
    <organismsDiffer>false</organismsDiffer>
    <experiments>2</experiments>
</comment>
<comment type="subcellular location">
    <subcellularLocation>
        <location evidence="2">Cytoplasm</location>
    </subcellularLocation>
</comment>
<comment type="similarity">
    <text evidence="2">Belongs to the FliH family.</text>
</comment>
<sequence>MSNELPWQVWTPDDLAPPPETFVPVEADNVTLTEDTPEPELTAEQQLEQELAQLKIQAHEQGYNAGLAEGRQKGHAQGYQEGLAQGLEQGQAQAQTQQAPIHARMQQLVSEFQNTLDALDSVIASRLMQMALEAARQVIGQTPAVDNSALIKQIQQLLQQEPLFSGKPQLRVHPDDLQRVEEMLGATLSLHGWRLRGDPTLHHGGCKVSADEGDLDASVATRWQELCRLAAPGVL</sequence>
<keyword id="KW-0002">3D-structure</keyword>
<keyword id="KW-1005">Bacterial flagellum biogenesis</keyword>
<keyword id="KW-1006">Bacterial flagellum protein export</keyword>
<keyword id="KW-0963">Cytoplasm</keyword>
<keyword id="KW-0653">Protein transport</keyword>
<keyword id="KW-1185">Reference proteome</keyword>
<keyword id="KW-0813">Transport</keyword>
<reference key="1">
    <citation type="journal article" date="1991" name="J. Bacteriol.">
        <title>Salmonella typhimurium mutants defective in flagellar filament regrowth and sequence similarity of FliI to F0F1, vacuolar, and archaebacterial ATPase subunits.</title>
        <authorList>
            <person name="Vogler A.P."/>
            <person name="Homma M."/>
            <person name="Irikura V.M."/>
            <person name="Macnab R.M."/>
        </authorList>
    </citation>
    <scope>NUCLEOTIDE SEQUENCE [GENOMIC DNA]</scope>
</reference>
<reference key="2">
    <citation type="journal article" date="2001" name="Nature">
        <title>Complete genome sequence of Salmonella enterica serovar Typhimurium LT2.</title>
        <authorList>
            <person name="McClelland M."/>
            <person name="Sanderson K.E."/>
            <person name="Spieth J."/>
            <person name="Clifton S.W."/>
            <person name="Latreille P."/>
            <person name="Courtney L."/>
            <person name="Porwollik S."/>
            <person name="Ali J."/>
            <person name="Dante M."/>
            <person name="Du F."/>
            <person name="Hou S."/>
            <person name="Layman D."/>
            <person name="Leonard S."/>
            <person name="Nguyen C."/>
            <person name="Scott K."/>
            <person name="Holmes A."/>
            <person name="Grewal N."/>
            <person name="Mulvaney E."/>
            <person name="Ryan E."/>
            <person name="Sun H."/>
            <person name="Florea L."/>
            <person name="Miller W."/>
            <person name="Stoneking T."/>
            <person name="Nhan M."/>
            <person name="Waterston R."/>
            <person name="Wilson R.K."/>
        </authorList>
    </citation>
    <scope>NUCLEOTIDE SEQUENCE [LARGE SCALE GENOMIC DNA]</scope>
    <source>
        <strain>LT2 / SGSC1412 / ATCC 700720</strain>
    </source>
</reference>
<reference key="3">
    <citation type="journal article" date="1989" name="J. Bacteriol.">
        <title>Flagellar switch of Salmonella typhimurium: gene sequences and deduced protein sequences.</title>
        <authorList>
            <person name="Kihara M."/>
            <person name="Homma M."/>
            <person name="Kutsukake K."/>
            <person name="Macnab R.M."/>
        </authorList>
    </citation>
    <scope>NUCLEOTIDE SEQUENCE [GENOMIC DNA] OF 1-10</scope>
</reference>
<evidence type="ECO:0000256" key="1">
    <source>
        <dbReference type="SAM" id="MobiDB-lite"/>
    </source>
</evidence>
<evidence type="ECO:0000305" key="2"/>
<evidence type="ECO:0007829" key="3">
    <source>
        <dbReference type="PDB" id="5B0O"/>
    </source>
</evidence>
<accession>P15934</accession>
<dbReference type="EMBL" id="M62408">
    <property type="protein sequence ID" value="AAA27100.1"/>
    <property type="molecule type" value="Genomic_DNA"/>
</dbReference>
<dbReference type="EMBL" id="AE006468">
    <property type="protein sequence ID" value="AAL20883.1"/>
    <property type="molecule type" value="Genomic_DNA"/>
</dbReference>
<dbReference type="EMBL" id="M24462">
    <property type="protein sequence ID" value="AAA27098.1"/>
    <property type="molecule type" value="Genomic_DNA"/>
</dbReference>
<dbReference type="PIR" id="B42364">
    <property type="entry name" value="B42364"/>
</dbReference>
<dbReference type="RefSeq" id="NP_460924.1">
    <property type="nucleotide sequence ID" value="NC_003197.2"/>
</dbReference>
<dbReference type="RefSeq" id="WP_000064163.1">
    <property type="nucleotide sequence ID" value="NC_003197.2"/>
</dbReference>
<dbReference type="PDB" id="5B0O">
    <property type="method" value="X-ray"/>
    <property type="resolution" value="3.00 A"/>
    <property type="chains" value="E/F/G/H/I/J/K/L=99-235"/>
</dbReference>
<dbReference type="PDBsum" id="5B0O"/>
<dbReference type="SMR" id="P15934"/>
<dbReference type="IntAct" id="P15934">
    <property type="interactions" value="2"/>
</dbReference>
<dbReference type="STRING" id="99287.STM1971"/>
<dbReference type="TCDB" id="3.A.6.2.1">
    <property type="family name" value="the type iii (virulence-related) secretory pathway (iiisp) family"/>
</dbReference>
<dbReference type="PaxDb" id="99287-STM1971"/>
<dbReference type="GeneID" id="1253492"/>
<dbReference type="KEGG" id="stm:STM1971"/>
<dbReference type="PATRIC" id="fig|99287.12.peg.2088"/>
<dbReference type="HOGENOM" id="CLU_062625_4_2_6"/>
<dbReference type="OMA" id="WALPSFD"/>
<dbReference type="PhylomeDB" id="P15934"/>
<dbReference type="BioCyc" id="SENT99287:STM1971-MONOMER"/>
<dbReference type="Proteomes" id="UP000001014">
    <property type="component" value="Chromosome"/>
</dbReference>
<dbReference type="GO" id="GO:0009288">
    <property type="term" value="C:bacterial-type flagellum"/>
    <property type="evidence" value="ECO:0007669"/>
    <property type="project" value="InterPro"/>
</dbReference>
<dbReference type="GO" id="GO:0005829">
    <property type="term" value="C:cytosol"/>
    <property type="evidence" value="ECO:0000318"/>
    <property type="project" value="GO_Central"/>
</dbReference>
<dbReference type="GO" id="GO:0003774">
    <property type="term" value="F:cytoskeletal motor activity"/>
    <property type="evidence" value="ECO:0007669"/>
    <property type="project" value="InterPro"/>
</dbReference>
<dbReference type="GO" id="GO:0044781">
    <property type="term" value="P:bacterial-type flagellum organization"/>
    <property type="evidence" value="ECO:0007669"/>
    <property type="project" value="UniProtKB-KW"/>
</dbReference>
<dbReference type="GO" id="GO:0071973">
    <property type="term" value="P:bacterial-type flagellum-dependent cell motility"/>
    <property type="evidence" value="ECO:0007669"/>
    <property type="project" value="InterPro"/>
</dbReference>
<dbReference type="GO" id="GO:0015031">
    <property type="term" value="P:protein transport"/>
    <property type="evidence" value="ECO:0007669"/>
    <property type="project" value="UniProtKB-KW"/>
</dbReference>
<dbReference type="InterPro" id="IPR000563">
    <property type="entry name" value="Flag_FliH"/>
</dbReference>
<dbReference type="InterPro" id="IPR018035">
    <property type="entry name" value="Flagellar_FliH/T3SS_HrpE"/>
</dbReference>
<dbReference type="InterPro" id="IPR051472">
    <property type="entry name" value="T3SS_Stator/FliH"/>
</dbReference>
<dbReference type="NCBIfam" id="NF004266">
    <property type="entry name" value="PRK05687.1-1"/>
    <property type="match status" value="1"/>
</dbReference>
<dbReference type="PANTHER" id="PTHR34982:SF1">
    <property type="entry name" value="FLAGELLAR ASSEMBLY PROTEIN FLIH"/>
    <property type="match status" value="1"/>
</dbReference>
<dbReference type="PANTHER" id="PTHR34982">
    <property type="entry name" value="YOP PROTEINS TRANSLOCATION PROTEIN L"/>
    <property type="match status" value="1"/>
</dbReference>
<dbReference type="Pfam" id="PF02108">
    <property type="entry name" value="FliH"/>
    <property type="match status" value="1"/>
</dbReference>
<dbReference type="PRINTS" id="PR01003">
    <property type="entry name" value="FLGFLIH"/>
</dbReference>
<protein>
    <recommendedName>
        <fullName>Flagellar assembly protein FliH</fullName>
    </recommendedName>
</protein>
<gene>
    <name type="primary">fliH</name>
    <name type="synonym">fla AII.3</name>
    <name type="synonym">fla BIII</name>
    <name type="ordered locus">STM1971</name>
</gene>